<gene>
    <name evidence="1" type="primary">fdhD</name>
    <name type="ordered locus">ECA0093</name>
</gene>
<sequence length="277" mass="29803">MQVFQVKEVHSQADAVLEGATQHSVYHPDSLHQPQSDWLAEEVPVALVYNGISHVVMMASPKELEQFALGFSLSEGIIQSPADIYGIDVQNACNGIEVQIELSSRRFAGLKERRRSMDGRTGCGVCGVEQLAEIGKPVAPLPFTQTFSLSKLENALVRLRDVQKIGQVTGCTHAASWIAPDGTLSGGSEDVGRHVALDKLLGARAKQGWQQGAALVSSRASYEMVQKSAMCGVEILFAVSAATSLAVDVAQRCNLTLVGFCRPGQATIYTHPQRLSE</sequence>
<organism>
    <name type="scientific">Pectobacterium atrosepticum (strain SCRI 1043 / ATCC BAA-672)</name>
    <name type="common">Erwinia carotovora subsp. atroseptica</name>
    <dbReference type="NCBI Taxonomy" id="218491"/>
    <lineage>
        <taxon>Bacteria</taxon>
        <taxon>Pseudomonadati</taxon>
        <taxon>Pseudomonadota</taxon>
        <taxon>Gammaproteobacteria</taxon>
        <taxon>Enterobacterales</taxon>
        <taxon>Pectobacteriaceae</taxon>
        <taxon>Pectobacterium</taxon>
    </lineage>
</organism>
<reference key="1">
    <citation type="journal article" date="2004" name="Proc. Natl. Acad. Sci. U.S.A.">
        <title>Genome sequence of the enterobacterial phytopathogen Erwinia carotovora subsp. atroseptica and characterization of virulence factors.</title>
        <authorList>
            <person name="Bell K.S."/>
            <person name="Sebaihia M."/>
            <person name="Pritchard L."/>
            <person name="Holden M.T.G."/>
            <person name="Hyman L.J."/>
            <person name="Holeva M.C."/>
            <person name="Thomson N.R."/>
            <person name="Bentley S.D."/>
            <person name="Churcher L.J.C."/>
            <person name="Mungall K."/>
            <person name="Atkin R."/>
            <person name="Bason N."/>
            <person name="Brooks K."/>
            <person name="Chillingworth T."/>
            <person name="Clark K."/>
            <person name="Doggett J."/>
            <person name="Fraser A."/>
            <person name="Hance Z."/>
            <person name="Hauser H."/>
            <person name="Jagels K."/>
            <person name="Moule S."/>
            <person name="Norbertczak H."/>
            <person name="Ormond D."/>
            <person name="Price C."/>
            <person name="Quail M.A."/>
            <person name="Sanders M."/>
            <person name="Walker D."/>
            <person name="Whitehead S."/>
            <person name="Salmond G.P.C."/>
            <person name="Birch P.R.J."/>
            <person name="Parkhill J."/>
            <person name="Toth I.K."/>
        </authorList>
    </citation>
    <scope>NUCLEOTIDE SEQUENCE [LARGE SCALE GENOMIC DNA]</scope>
    <source>
        <strain>SCRI 1043 / ATCC BAA-672</strain>
    </source>
</reference>
<proteinExistence type="inferred from homology"/>
<accession>Q6DB09</accession>
<dbReference type="EMBL" id="BX950851">
    <property type="protein sequence ID" value="CAG73013.1"/>
    <property type="molecule type" value="Genomic_DNA"/>
</dbReference>
<dbReference type="RefSeq" id="WP_011091736.1">
    <property type="nucleotide sequence ID" value="NC_004547.2"/>
</dbReference>
<dbReference type="SMR" id="Q6DB09"/>
<dbReference type="STRING" id="218491.ECA0093"/>
<dbReference type="KEGG" id="eca:ECA0093"/>
<dbReference type="PATRIC" id="fig|218491.5.peg.95"/>
<dbReference type="eggNOG" id="COG1526">
    <property type="taxonomic scope" value="Bacteria"/>
</dbReference>
<dbReference type="HOGENOM" id="CLU_056887_2_0_6"/>
<dbReference type="OrthoDB" id="3197277at2"/>
<dbReference type="Proteomes" id="UP000007966">
    <property type="component" value="Chromosome"/>
</dbReference>
<dbReference type="GO" id="GO:0005737">
    <property type="term" value="C:cytoplasm"/>
    <property type="evidence" value="ECO:0007669"/>
    <property type="project" value="UniProtKB-SubCell"/>
</dbReference>
<dbReference type="GO" id="GO:0097163">
    <property type="term" value="F:sulfur carrier activity"/>
    <property type="evidence" value="ECO:0007669"/>
    <property type="project" value="UniProtKB-UniRule"/>
</dbReference>
<dbReference type="GO" id="GO:0016783">
    <property type="term" value="F:sulfurtransferase activity"/>
    <property type="evidence" value="ECO:0007669"/>
    <property type="project" value="InterPro"/>
</dbReference>
<dbReference type="GO" id="GO:0006777">
    <property type="term" value="P:Mo-molybdopterin cofactor biosynthetic process"/>
    <property type="evidence" value="ECO:0007669"/>
    <property type="project" value="UniProtKB-UniRule"/>
</dbReference>
<dbReference type="Gene3D" id="3.10.20.10">
    <property type="match status" value="1"/>
</dbReference>
<dbReference type="Gene3D" id="3.40.140.10">
    <property type="entry name" value="Cytidine Deaminase, domain 2"/>
    <property type="match status" value="1"/>
</dbReference>
<dbReference type="HAMAP" id="MF_00187">
    <property type="entry name" value="FdhD"/>
    <property type="match status" value="1"/>
</dbReference>
<dbReference type="InterPro" id="IPR016193">
    <property type="entry name" value="Cytidine_deaminase-like"/>
</dbReference>
<dbReference type="InterPro" id="IPR003786">
    <property type="entry name" value="FdhD"/>
</dbReference>
<dbReference type="NCBIfam" id="TIGR00129">
    <property type="entry name" value="fdhD_narQ"/>
    <property type="match status" value="1"/>
</dbReference>
<dbReference type="PANTHER" id="PTHR30592">
    <property type="entry name" value="FORMATE DEHYDROGENASE"/>
    <property type="match status" value="1"/>
</dbReference>
<dbReference type="PANTHER" id="PTHR30592:SF1">
    <property type="entry name" value="SULFUR CARRIER PROTEIN FDHD"/>
    <property type="match status" value="1"/>
</dbReference>
<dbReference type="Pfam" id="PF02634">
    <property type="entry name" value="FdhD-NarQ"/>
    <property type="match status" value="1"/>
</dbReference>
<dbReference type="PIRSF" id="PIRSF015626">
    <property type="entry name" value="FdhD"/>
    <property type="match status" value="1"/>
</dbReference>
<dbReference type="SUPFAM" id="SSF53927">
    <property type="entry name" value="Cytidine deaminase-like"/>
    <property type="match status" value="1"/>
</dbReference>
<feature type="chain" id="PRO_0000152902" description="Sulfur carrier protein FdhD">
    <location>
        <begin position="1"/>
        <end position="277"/>
    </location>
</feature>
<feature type="active site" description="Cysteine persulfide intermediate" evidence="1">
    <location>
        <position position="123"/>
    </location>
</feature>
<protein>
    <recommendedName>
        <fullName evidence="1">Sulfur carrier protein FdhD</fullName>
    </recommendedName>
</protein>
<comment type="function">
    <text evidence="1">Required for formate dehydrogenase (FDH) activity. Acts as a sulfur carrier protein that transfers sulfur from IscS to the molybdenum cofactor prior to its insertion into FDH.</text>
</comment>
<comment type="subcellular location">
    <subcellularLocation>
        <location evidence="1">Cytoplasm</location>
    </subcellularLocation>
</comment>
<comment type="similarity">
    <text evidence="1">Belongs to the FdhD family.</text>
</comment>
<name>FDHD_PECAS</name>
<keyword id="KW-0963">Cytoplasm</keyword>
<keyword id="KW-0501">Molybdenum cofactor biosynthesis</keyword>
<keyword id="KW-1185">Reference proteome</keyword>
<evidence type="ECO:0000255" key="1">
    <source>
        <dbReference type="HAMAP-Rule" id="MF_00187"/>
    </source>
</evidence>